<keyword id="KW-0963">Cytoplasm</keyword>
<keyword id="KW-0269">Exonuclease</keyword>
<keyword id="KW-0378">Hydrolase</keyword>
<keyword id="KW-0540">Nuclease</keyword>
<keyword id="KW-0819">tRNA processing</keyword>
<gene>
    <name evidence="1" type="primary">rnd</name>
    <name type="ordered locus">Spro_2759</name>
</gene>
<feature type="chain" id="PRO_0000411071" description="Ribonuclease D">
    <location>
        <begin position="1"/>
        <end position="373"/>
    </location>
</feature>
<feature type="domain" description="3'-5' exonuclease" evidence="1">
    <location>
        <begin position="3"/>
        <end position="171"/>
    </location>
</feature>
<feature type="domain" description="HRDC" evidence="1">
    <location>
        <begin position="210"/>
        <end position="289"/>
    </location>
</feature>
<accession>A8GFH0</accession>
<dbReference type="EC" id="3.1.13.5" evidence="1"/>
<dbReference type="EMBL" id="CP000826">
    <property type="protein sequence ID" value="ABV41860.1"/>
    <property type="status" value="ALT_INIT"/>
    <property type="molecule type" value="Genomic_DNA"/>
</dbReference>
<dbReference type="SMR" id="A8GFH0"/>
<dbReference type="STRING" id="399741.Spro_2759"/>
<dbReference type="KEGG" id="spe:Spro_2759"/>
<dbReference type="eggNOG" id="COG0349">
    <property type="taxonomic scope" value="Bacteria"/>
</dbReference>
<dbReference type="HOGENOM" id="CLU_042387_0_1_6"/>
<dbReference type="OrthoDB" id="9800549at2"/>
<dbReference type="GO" id="GO:0005737">
    <property type="term" value="C:cytoplasm"/>
    <property type="evidence" value="ECO:0007669"/>
    <property type="project" value="UniProtKB-SubCell"/>
</dbReference>
<dbReference type="GO" id="GO:0008408">
    <property type="term" value="F:3'-5' exonuclease activity"/>
    <property type="evidence" value="ECO:0007669"/>
    <property type="project" value="InterPro"/>
</dbReference>
<dbReference type="GO" id="GO:0003676">
    <property type="term" value="F:nucleic acid binding"/>
    <property type="evidence" value="ECO:0007669"/>
    <property type="project" value="InterPro"/>
</dbReference>
<dbReference type="GO" id="GO:0000166">
    <property type="term" value="F:nucleotide binding"/>
    <property type="evidence" value="ECO:0007669"/>
    <property type="project" value="InterPro"/>
</dbReference>
<dbReference type="GO" id="GO:0033890">
    <property type="term" value="F:ribonuclease D activity"/>
    <property type="evidence" value="ECO:0007669"/>
    <property type="project" value="UniProtKB-UniRule"/>
</dbReference>
<dbReference type="GO" id="GO:0042780">
    <property type="term" value="P:tRNA 3'-end processing"/>
    <property type="evidence" value="ECO:0007669"/>
    <property type="project" value="UniProtKB-UniRule"/>
</dbReference>
<dbReference type="CDD" id="cd06142">
    <property type="entry name" value="RNaseD_exo"/>
    <property type="match status" value="1"/>
</dbReference>
<dbReference type="FunFam" id="3.30.420.10:FF:000060">
    <property type="entry name" value="Ribonuclease D"/>
    <property type="match status" value="1"/>
</dbReference>
<dbReference type="Gene3D" id="1.10.150.80">
    <property type="entry name" value="HRDC domain"/>
    <property type="match status" value="2"/>
</dbReference>
<dbReference type="Gene3D" id="3.30.420.10">
    <property type="entry name" value="Ribonuclease H-like superfamily/Ribonuclease H"/>
    <property type="match status" value="1"/>
</dbReference>
<dbReference type="HAMAP" id="MF_01899">
    <property type="entry name" value="RNase_D"/>
    <property type="match status" value="1"/>
</dbReference>
<dbReference type="InterPro" id="IPR002562">
    <property type="entry name" value="3'-5'_exonuclease_dom"/>
</dbReference>
<dbReference type="InterPro" id="IPR010997">
    <property type="entry name" value="HRDC-like_sf"/>
</dbReference>
<dbReference type="InterPro" id="IPR002121">
    <property type="entry name" value="HRDC_dom"/>
</dbReference>
<dbReference type="InterPro" id="IPR044876">
    <property type="entry name" value="HRDC_dom_sf"/>
</dbReference>
<dbReference type="InterPro" id="IPR006292">
    <property type="entry name" value="RNase_D"/>
</dbReference>
<dbReference type="InterPro" id="IPR051086">
    <property type="entry name" value="RNase_D-like"/>
</dbReference>
<dbReference type="InterPro" id="IPR048579">
    <property type="entry name" value="RNAseD_HRDC_C"/>
</dbReference>
<dbReference type="InterPro" id="IPR012337">
    <property type="entry name" value="RNaseH-like_sf"/>
</dbReference>
<dbReference type="InterPro" id="IPR036397">
    <property type="entry name" value="RNaseH_sf"/>
</dbReference>
<dbReference type="NCBIfam" id="NF008089">
    <property type="entry name" value="PRK10829.1"/>
    <property type="match status" value="1"/>
</dbReference>
<dbReference type="NCBIfam" id="TIGR01388">
    <property type="entry name" value="rnd"/>
    <property type="match status" value="1"/>
</dbReference>
<dbReference type="PANTHER" id="PTHR47649">
    <property type="entry name" value="RIBONUCLEASE D"/>
    <property type="match status" value="1"/>
</dbReference>
<dbReference type="PANTHER" id="PTHR47649:SF1">
    <property type="entry name" value="RIBONUCLEASE D"/>
    <property type="match status" value="1"/>
</dbReference>
<dbReference type="Pfam" id="PF01612">
    <property type="entry name" value="DNA_pol_A_exo1"/>
    <property type="match status" value="1"/>
</dbReference>
<dbReference type="Pfam" id="PF00570">
    <property type="entry name" value="HRDC"/>
    <property type="match status" value="1"/>
</dbReference>
<dbReference type="Pfam" id="PF21293">
    <property type="entry name" value="RNAseD_HRDC_C"/>
    <property type="match status" value="1"/>
</dbReference>
<dbReference type="SMART" id="SM00474">
    <property type="entry name" value="35EXOc"/>
    <property type="match status" value="1"/>
</dbReference>
<dbReference type="SMART" id="SM00341">
    <property type="entry name" value="HRDC"/>
    <property type="match status" value="1"/>
</dbReference>
<dbReference type="SUPFAM" id="SSF47819">
    <property type="entry name" value="HRDC-like"/>
    <property type="match status" value="2"/>
</dbReference>
<dbReference type="SUPFAM" id="SSF53098">
    <property type="entry name" value="Ribonuclease H-like"/>
    <property type="match status" value="1"/>
</dbReference>
<dbReference type="PROSITE" id="PS50967">
    <property type="entry name" value="HRDC"/>
    <property type="match status" value="1"/>
</dbReference>
<reference key="1">
    <citation type="submission" date="2007-09" db="EMBL/GenBank/DDBJ databases">
        <title>Complete sequence of chromosome of Serratia proteamaculans 568.</title>
        <authorList>
            <consortium name="US DOE Joint Genome Institute"/>
            <person name="Copeland A."/>
            <person name="Lucas S."/>
            <person name="Lapidus A."/>
            <person name="Barry K."/>
            <person name="Glavina del Rio T."/>
            <person name="Dalin E."/>
            <person name="Tice H."/>
            <person name="Pitluck S."/>
            <person name="Chain P."/>
            <person name="Malfatti S."/>
            <person name="Shin M."/>
            <person name="Vergez L."/>
            <person name="Schmutz J."/>
            <person name="Larimer F."/>
            <person name="Land M."/>
            <person name="Hauser L."/>
            <person name="Kyrpides N."/>
            <person name="Kim E."/>
            <person name="Taghavi S."/>
            <person name="Newman L."/>
            <person name="Vangronsveld J."/>
            <person name="van der Lelie D."/>
            <person name="Richardson P."/>
        </authorList>
    </citation>
    <scope>NUCLEOTIDE SEQUENCE [LARGE SCALE GENOMIC DNA]</scope>
    <source>
        <strain>568</strain>
    </source>
</reference>
<proteinExistence type="inferred from homology"/>
<sequence>MNYQLITTDAGLQQVCDQAKKHAQIALDTEFVRTRTYYPQLGLIQLYDGEQLSLIDPLPIKQWQPFIELLSNTQVVKFLHAGSEDLEVFLNAFKTLPTPMVDTQILAAFTGRPMSCGFATLVAEYMEVELDKSEARTDWLARPLTEKQCVYAAADVFYLLPMAKRLVQETEEAGWTAAASNECLLLCQRRSETLAPELAYREITNAWQLRPRQLGCLQKLAEWRLRQARERDLAVNFVVREENLWQVARHMPTSLGELDSLGLSGPEIRYHGKTLVALVAEAAELEESALPEPLPNLIDQPGYKKVFKEIKAAIVIASEQSGLSSELLASRRQINQLLNWHWKLKVGDNLPELVSGWRGDLLAAPLQDILKGY</sequence>
<name>RND_SERP5</name>
<protein>
    <recommendedName>
        <fullName evidence="1">Ribonuclease D</fullName>
        <shortName evidence="1">RNase D</shortName>
        <ecNumber evidence="1">3.1.13.5</ecNumber>
    </recommendedName>
</protein>
<comment type="function">
    <text evidence="1">Exonuclease involved in the 3' processing of various precursor tRNAs. Initiates hydrolysis at the 3'-terminus of an RNA molecule and releases 5'-mononucleotides.</text>
</comment>
<comment type="catalytic activity">
    <reaction evidence="1">
        <text>Exonucleolytic cleavage that removes extra residues from the 3'-terminus of tRNA to produce 5'-mononucleotides.</text>
        <dbReference type="EC" id="3.1.13.5"/>
    </reaction>
</comment>
<comment type="cofactor">
    <cofactor evidence="1">
        <name>a divalent metal cation</name>
        <dbReference type="ChEBI" id="CHEBI:60240"/>
    </cofactor>
</comment>
<comment type="subcellular location">
    <subcellularLocation>
        <location evidence="1">Cytoplasm</location>
    </subcellularLocation>
</comment>
<comment type="similarity">
    <text evidence="1">Belongs to the RNase D family.</text>
</comment>
<comment type="sequence caution" evidence="2">
    <conflict type="erroneous initiation">
        <sequence resource="EMBL-CDS" id="ABV41860"/>
    </conflict>
    <text>Extended N-terminus.</text>
</comment>
<organism>
    <name type="scientific">Serratia proteamaculans (strain 568)</name>
    <dbReference type="NCBI Taxonomy" id="399741"/>
    <lineage>
        <taxon>Bacteria</taxon>
        <taxon>Pseudomonadati</taxon>
        <taxon>Pseudomonadota</taxon>
        <taxon>Gammaproteobacteria</taxon>
        <taxon>Enterobacterales</taxon>
        <taxon>Yersiniaceae</taxon>
        <taxon>Serratia</taxon>
    </lineage>
</organism>
<evidence type="ECO:0000255" key="1">
    <source>
        <dbReference type="HAMAP-Rule" id="MF_01899"/>
    </source>
</evidence>
<evidence type="ECO:0000305" key="2"/>